<organism>
    <name type="scientific">Caldicellulosiruptor saccharolyticus (strain ATCC 43494 / DSM 8903 / Tp8T 6331)</name>
    <dbReference type="NCBI Taxonomy" id="351627"/>
    <lineage>
        <taxon>Bacteria</taxon>
        <taxon>Bacillati</taxon>
        <taxon>Bacillota</taxon>
        <taxon>Bacillota incertae sedis</taxon>
        <taxon>Caldicellulosiruptorales</taxon>
        <taxon>Caldicellulosiruptoraceae</taxon>
        <taxon>Caldicellulosiruptor</taxon>
    </lineage>
</organism>
<gene>
    <name evidence="1" type="primary">rpsI</name>
    <name type="ordered locus">Csac_1343</name>
</gene>
<dbReference type="EMBL" id="CP000679">
    <property type="protein sequence ID" value="ABP66945.2"/>
    <property type="molecule type" value="Genomic_DNA"/>
</dbReference>
<dbReference type="RefSeq" id="WP_011916880.1">
    <property type="nucleotide sequence ID" value="NC_009437.1"/>
</dbReference>
<dbReference type="SMR" id="A4XJ60"/>
<dbReference type="STRING" id="351627.Csac_1343"/>
<dbReference type="KEGG" id="csc:Csac_1343"/>
<dbReference type="eggNOG" id="COG0103">
    <property type="taxonomic scope" value="Bacteria"/>
</dbReference>
<dbReference type="HOGENOM" id="CLU_046483_2_1_9"/>
<dbReference type="OrthoDB" id="9803965at2"/>
<dbReference type="Proteomes" id="UP000000256">
    <property type="component" value="Chromosome"/>
</dbReference>
<dbReference type="GO" id="GO:0022627">
    <property type="term" value="C:cytosolic small ribosomal subunit"/>
    <property type="evidence" value="ECO:0007669"/>
    <property type="project" value="TreeGrafter"/>
</dbReference>
<dbReference type="GO" id="GO:0003723">
    <property type="term" value="F:RNA binding"/>
    <property type="evidence" value="ECO:0007669"/>
    <property type="project" value="TreeGrafter"/>
</dbReference>
<dbReference type="GO" id="GO:0003735">
    <property type="term" value="F:structural constituent of ribosome"/>
    <property type="evidence" value="ECO:0007669"/>
    <property type="project" value="InterPro"/>
</dbReference>
<dbReference type="GO" id="GO:0006412">
    <property type="term" value="P:translation"/>
    <property type="evidence" value="ECO:0007669"/>
    <property type="project" value="UniProtKB-UniRule"/>
</dbReference>
<dbReference type="FunFam" id="3.30.230.10:FF:000001">
    <property type="entry name" value="30S ribosomal protein S9"/>
    <property type="match status" value="1"/>
</dbReference>
<dbReference type="Gene3D" id="3.30.230.10">
    <property type="match status" value="1"/>
</dbReference>
<dbReference type="HAMAP" id="MF_00532_B">
    <property type="entry name" value="Ribosomal_uS9_B"/>
    <property type="match status" value="1"/>
</dbReference>
<dbReference type="InterPro" id="IPR020568">
    <property type="entry name" value="Ribosomal_Su5_D2-typ_SF"/>
</dbReference>
<dbReference type="InterPro" id="IPR000754">
    <property type="entry name" value="Ribosomal_uS9"/>
</dbReference>
<dbReference type="InterPro" id="IPR023035">
    <property type="entry name" value="Ribosomal_uS9_bac/plastid"/>
</dbReference>
<dbReference type="InterPro" id="IPR020574">
    <property type="entry name" value="Ribosomal_uS9_CS"/>
</dbReference>
<dbReference type="InterPro" id="IPR014721">
    <property type="entry name" value="Ribsml_uS5_D2-typ_fold_subgr"/>
</dbReference>
<dbReference type="NCBIfam" id="NF001099">
    <property type="entry name" value="PRK00132.1"/>
    <property type="match status" value="1"/>
</dbReference>
<dbReference type="PANTHER" id="PTHR21569">
    <property type="entry name" value="RIBOSOMAL PROTEIN S9"/>
    <property type="match status" value="1"/>
</dbReference>
<dbReference type="PANTHER" id="PTHR21569:SF1">
    <property type="entry name" value="SMALL RIBOSOMAL SUBUNIT PROTEIN US9M"/>
    <property type="match status" value="1"/>
</dbReference>
<dbReference type="Pfam" id="PF00380">
    <property type="entry name" value="Ribosomal_S9"/>
    <property type="match status" value="1"/>
</dbReference>
<dbReference type="SUPFAM" id="SSF54211">
    <property type="entry name" value="Ribosomal protein S5 domain 2-like"/>
    <property type="match status" value="1"/>
</dbReference>
<dbReference type="PROSITE" id="PS00360">
    <property type="entry name" value="RIBOSOMAL_S9"/>
    <property type="match status" value="1"/>
</dbReference>
<proteinExistence type="inferred from homology"/>
<protein>
    <recommendedName>
        <fullName evidence="1">Small ribosomal subunit protein uS9</fullName>
    </recommendedName>
    <alternativeName>
        <fullName evidence="2">30S ribosomal protein S9</fullName>
    </alternativeName>
</protein>
<accession>A4XJ60</accession>
<name>RS9_CALS8</name>
<reference key="1">
    <citation type="submission" date="2007-04" db="EMBL/GenBank/DDBJ databases">
        <title>Genome sequence of the thermophilic hydrogen-producing bacterium Caldicellulosiruptor saccharolyticus DSM 8903.</title>
        <authorList>
            <person name="Copeland A."/>
            <person name="Lucas S."/>
            <person name="Lapidus A."/>
            <person name="Barry K."/>
            <person name="Detter J.C."/>
            <person name="Glavina del Rio T."/>
            <person name="Hammon N."/>
            <person name="Israni S."/>
            <person name="Dalin E."/>
            <person name="Tice H."/>
            <person name="Pitluck S."/>
            <person name="Kiss H."/>
            <person name="Brettin T."/>
            <person name="Bruce D."/>
            <person name="Han C."/>
            <person name="Schmutz J."/>
            <person name="Larimer F."/>
            <person name="Land M."/>
            <person name="Hauser L."/>
            <person name="Kyrpides N."/>
            <person name="Lykidis A."/>
            <person name="van de Werken H.J.G."/>
            <person name="Verhaart M.R.A."/>
            <person name="VanFossen A.L."/>
            <person name="Lewis D.L."/>
            <person name="Nichols J.D."/>
            <person name="Goorissen H.P."/>
            <person name="van Niel E.W.J."/>
            <person name="Stams F.J.M."/>
            <person name="Willquist K.U."/>
            <person name="Ward D.E."/>
            <person name="van der Oost J."/>
            <person name="Kelly R.M."/>
            <person name="Kengen S.M.W."/>
            <person name="Richardson P."/>
        </authorList>
    </citation>
    <scope>NUCLEOTIDE SEQUENCE [LARGE SCALE GENOMIC DNA]</scope>
    <source>
        <strain>ATCC 43494 / DSM 8903 / Tp8T 6331</strain>
    </source>
</reference>
<keyword id="KW-0687">Ribonucleoprotein</keyword>
<keyword id="KW-0689">Ribosomal protein</keyword>
<comment type="similarity">
    <text evidence="1">Belongs to the universal ribosomal protein uS9 family.</text>
</comment>
<sequence length="130" mass="14606">MAQIRYYATGRRKTSVAKVWLSPGNGKIIVNDKNMEEYFPLETLRIIVKQPLTLTETLNKYDVIAKVKGGGLSGQAGALRHGIARALVLADPTLRPVLKKAGFLTRDPRMVERKKYGLKKARRAPQFSKR</sequence>
<evidence type="ECO:0000255" key="1">
    <source>
        <dbReference type="HAMAP-Rule" id="MF_00532"/>
    </source>
</evidence>
<evidence type="ECO:0000305" key="2"/>
<feature type="chain" id="PRO_1000128097" description="Small ribosomal subunit protein uS9">
    <location>
        <begin position="1"/>
        <end position="130"/>
    </location>
</feature>